<protein>
    <recommendedName>
        <fullName>Homeobox protein HMX3-B</fullName>
    </recommendedName>
    <alternativeName>
        <fullName>Homeobox protein H6 family member 3-B</fullName>
    </alternativeName>
    <alternativeName>
        <fullName>Homeobox protein Nkx-5.1.2</fullName>
    </alternativeName>
    <alternativeName>
        <fullName>OlNkx-5.1.2</fullName>
    </alternativeName>
</protein>
<sequence>MADSDAQETRPPAKDSPFSIKNLLNIEDKPTKPKNGLGSSKGVFESGFFSRLGDLSLPRFELPAQRIGLPAQYLERASAWWYPYALGTHFRTAGAEKVNQRETSPILDRHTPDPPKSDQESKEESADDEIALEESDAEEPKKETDQEDDWMRKGEDLESDKKPCRKKKTRTVFSRSQVFQLESTFDIKRYLSSSERAGLAASLHLTETQVKIWFQNRRNKWKRQLAAELEAANMSHAAAQRIVRVPILYHDSGAPEATGGPGTNSPGGQPLLSFPHHMYYSNAVPLLRPV</sequence>
<name>HMX3B_ORYLA</name>
<comment type="function">
    <text evidence="1">Transcription factor involved in specification of neuronal cell types and which is required for inner ear and hypothalamus development. Binds to the 5'-CAAGTG-3' core sequence (By similarity).</text>
</comment>
<comment type="subcellular location">
    <subcellularLocation>
        <location evidence="2">Nucleus</location>
    </subcellularLocation>
</comment>
<comment type="tissue specificity">
    <text>Expressed in the ear placode and vesicle and in cells forming the vestibulo-acoustic ganglion.</text>
</comment>
<comment type="similarity">
    <text evidence="4">Belongs to the HMX homeobox family.</text>
</comment>
<keyword id="KW-0217">Developmental protein</keyword>
<keyword id="KW-0221">Differentiation</keyword>
<keyword id="KW-0238">DNA-binding</keyword>
<keyword id="KW-0371">Homeobox</keyword>
<keyword id="KW-0524">Neurogenesis</keyword>
<keyword id="KW-0539">Nucleus</keyword>
<keyword id="KW-1185">Reference proteome</keyword>
<keyword id="KW-0804">Transcription</keyword>
<keyword id="KW-0805">Transcription regulation</keyword>
<reference key="1">
    <citation type="journal article" date="2001" name="Dev. Genes Evol.">
        <title>Five Nkx5 genes show differential expression patterns in anlagen of sensory organs in medaka: insight into the evolution of the gene family.</title>
        <authorList>
            <person name="Adamska M."/>
            <person name="Wolff A."/>
            <person name="Kreusler M."/>
            <person name="Wittbrodt J."/>
            <person name="Braun T."/>
            <person name="Bober E."/>
        </authorList>
    </citation>
    <scope>NUCLEOTIDE SEQUENCE [GENOMIC DNA]</scope>
    <scope>DEVELOPMENTAL STAGE</scope>
</reference>
<gene>
    <name type="primary">hmx3b</name>
    <name type="synonym">nkx-5.1.2</name>
    <name type="synonym">nkx5-1.2</name>
</gene>
<organism>
    <name type="scientific">Oryzias latipes</name>
    <name type="common">Japanese rice fish</name>
    <name type="synonym">Japanese killifish</name>
    <dbReference type="NCBI Taxonomy" id="8090"/>
    <lineage>
        <taxon>Eukaryota</taxon>
        <taxon>Metazoa</taxon>
        <taxon>Chordata</taxon>
        <taxon>Craniata</taxon>
        <taxon>Vertebrata</taxon>
        <taxon>Euteleostomi</taxon>
        <taxon>Actinopterygii</taxon>
        <taxon>Neopterygii</taxon>
        <taxon>Teleostei</taxon>
        <taxon>Neoteleostei</taxon>
        <taxon>Acanthomorphata</taxon>
        <taxon>Ovalentaria</taxon>
        <taxon>Atherinomorphae</taxon>
        <taxon>Beloniformes</taxon>
        <taxon>Adrianichthyidae</taxon>
        <taxon>Oryziinae</taxon>
        <taxon>Oryzias</taxon>
    </lineage>
</organism>
<evidence type="ECO:0000250" key="1"/>
<evidence type="ECO:0000255" key="2">
    <source>
        <dbReference type="PROSITE-ProRule" id="PRU00108"/>
    </source>
</evidence>
<evidence type="ECO:0000256" key="3">
    <source>
        <dbReference type="SAM" id="MobiDB-lite"/>
    </source>
</evidence>
<evidence type="ECO:0000305" key="4"/>
<dbReference type="EMBL" id="AF365971">
    <property type="protein sequence ID" value="AAL04485.1"/>
    <property type="molecule type" value="Genomic_DNA"/>
</dbReference>
<dbReference type="SMR" id="Q90XN9"/>
<dbReference type="STRING" id="8090.ENSORLP00000011972"/>
<dbReference type="eggNOG" id="KOG0485">
    <property type="taxonomic scope" value="Eukaryota"/>
</dbReference>
<dbReference type="InParanoid" id="Q90XN9"/>
<dbReference type="Proteomes" id="UP000001038">
    <property type="component" value="Unplaced"/>
</dbReference>
<dbReference type="Proteomes" id="UP000265180">
    <property type="component" value="Chromosome 9"/>
</dbReference>
<dbReference type="Proteomes" id="UP000265200">
    <property type="component" value="Chromosome 9"/>
</dbReference>
<dbReference type="GO" id="GO:0005634">
    <property type="term" value="C:nucleus"/>
    <property type="evidence" value="ECO:0000318"/>
    <property type="project" value="GO_Central"/>
</dbReference>
<dbReference type="GO" id="GO:0000981">
    <property type="term" value="F:DNA-binding transcription factor activity, RNA polymerase II-specific"/>
    <property type="evidence" value="ECO:0000318"/>
    <property type="project" value="GO_Central"/>
</dbReference>
<dbReference type="GO" id="GO:0000978">
    <property type="term" value="F:RNA polymerase II cis-regulatory region sequence-specific DNA binding"/>
    <property type="evidence" value="ECO:0000318"/>
    <property type="project" value="GO_Central"/>
</dbReference>
<dbReference type="GO" id="GO:0030154">
    <property type="term" value="P:cell differentiation"/>
    <property type="evidence" value="ECO:0000318"/>
    <property type="project" value="GO_Central"/>
</dbReference>
<dbReference type="GO" id="GO:0007399">
    <property type="term" value="P:nervous system development"/>
    <property type="evidence" value="ECO:0007669"/>
    <property type="project" value="UniProtKB-KW"/>
</dbReference>
<dbReference type="GO" id="GO:0006357">
    <property type="term" value="P:regulation of transcription by RNA polymerase II"/>
    <property type="evidence" value="ECO:0000318"/>
    <property type="project" value="GO_Central"/>
</dbReference>
<dbReference type="CDD" id="cd00086">
    <property type="entry name" value="homeodomain"/>
    <property type="match status" value="1"/>
</dbReference>
<dbReference type="FunFam" id="1.10.10.60:FF:000053">
    <property type="entry name" value="H6 family homeobox 2"/>
    <property type="match status" value="1"/>
</dbReference>
<dbReference type="Gene3D" id="1.10.10.60">
    <property type="entry name" value="Homeodomain-like"/>
    <property type="match status" value="1"/>
</dbReference>
<dbReference type="InterPro" id="IPR001356">
    <property type="entry name" value="HD"/>
</dbReference>
<dbReference type="InterPro" id="IPR020479">
    <property type="entry name" value="HD_metazoa"/>
</dbReference>
<dbReference type="InterPro" id="IPR051300">
    <property type="entry name" value="HMX_Homeobox_TF"/>
</dbReference>
<dbReference type="InterPro" id="IPR017970">
    <property type="entry name" value="Homeobox_CS"/>
</dbReference>
<dbReference type="InterPro" id="IPR009057">
    <property type="entry name" value="Homeodomain-like_sf"/>
</dbReference>
<dbReference type="PANTHER" id="PTHR46110">
    <property type="entry name" value="HOMEOBOX PROTEIN HMX"/>
    <property type="match status" value="1"/>
</dbReference>
<dbReference type="PANTHER" id="PTHR46110:SF2">
    <property type="entry name" value="HOMEOBOX PROTEIN HMX3"/>
    <property type="match status" value="1"/>
</dbReference>
<dbReference type="Pfam" id="PF00046">
    <property type="entry name" value="Homeodomain"/>
    <property type="match status" value="1"/>
</dbReference>
<dbReference type="PRINTS" id="PR00024">
    <property type="entry name" value="HOMEOBOX"/>
</dbReference>
<dbReference type="SMART" id="SM00389">
    <property type="entry name" value="HOX"/>
    <property type="match status" value="1"/>
</dbReference>
<dbReference type="SUPFAM" id="SSF46689">
    <property type="entry name" value="Homeodomain-like"/>
    <property type="match status" value="1"/>
</dbReference>
<dbReference type="PROSITE" id="PS00027">
    <property type="entry name" value="HOMEOBOX_1"/>
    <property type="match status" value="1"/>
</dbReference>
<dbReference type="PROSITE" id="PS50071">
    <property type="entry name" value="HOMEOBOX_2"/>
    <property type="match status" value="1"/>
</dbReference>
<proteinExistence type="evidence at transcript level"/>
<feature type="chain" id="PRO_0000341386" description="Homeobox protein HMX3-B">
    <location>
        <begin position="1"/>
        <end position="290"/>
    </location>
</feature>
<feature type="DNA-binding region" description="Homeobox" evidence="2">
    <location>
        <begin position="166"/>
        <end position="225"/>
    </location>
</feature>
<feature type="region of interest" description="Disordered" evidence="3">
    <location>
        <begin position="1"/>
        <end position="41"/>
    </location>
</feature>
<feature type="region of interest" description="Disordered" evidence="3">
    <location>
        <begin position="96"/>
        <end position="169"/>
    </location>
</feature>
<feature type="compositionally biased region" description="Basic and acidic residues" evidence="3">
    <location>
        <begin position="107"/>
        <end position="124"/>
    </location>
</feature>
<feature type="compositionally biased region" description="Acidic residues" evidence="3">
    <location>
        <begin position="125"/>
        <end position="137"/>
    </location>
</feature>
<feature type="compositionally biased region" description="Basic and acidic residues" evidence="3">
    <location>
        <begin position="138"/>
        <end position="162"/>
    </location>
</feature>
<accession>Q90XN9</accession>